<sequence length="428" mass="45983">MLYKRSSQLFAEAEKVIPGGVNSPVRAFKAVGGTPIFVKSAKGAYLYDEDGNKLIDYINSWGPMVLGHAYQPVVDAVIEKAKLGTSFGMPTELETEIAALAVSMVPNIDKIRFVNSGTEACMSAIRLARGFTKRDKIIKFAGCYHGHSDSFLIQAGSGAVTFGSPNSPGVTEGTAKDTLLAKYNDLENVKTLIEANKGEIAAIIIEAVAGNMGCIPPAEGFLQGLRDLCTANGILLIFDEVMTGFRLARGGVQELYGIDADIVTFGKVIGGGLPVGAFAAREEIMNYLAPLGPVYQAGTLSGNPLAMAAGYAMLKALDNDREIFTRLEEKTAYLEAGIDRVLKANNVVFTINRVGSMISVHFDAGPVTDFKTAAKGDNETFKKFFHGLLQEGVYIAPSAYETWFITDALTYEDLDFTINAIDKVSKTF</sequence>
<comment type="catalytic activity">
    <reaction evidence="1">
        <text>(S)-4-amino-5-oxopentanoate = 5-aminolevulinate</text>
        <dbReference type="Rhea" id="RHEA:14265"/>
        <dbReference type="ChEBI" id="CHEBI:57501"/>
        <dbReference type="ChEBI" id="CHEBI:356416"/>
        <dbReference type="EC" id="5.4.3.8"/>
    </reaction>
</comment>
<comment type="cofactor">
    <cofactor evidence="1">
        <name>pyridoxal 5'-phosphate</name>
        <dbReference type="ChEBI" id="CHEBI:597326"/>
    </cofactor>
</comment>
<comment type="pathway">
    <text evidence="1">Porphyrin-containing compound metabolism; protoporphyrin-IX biosynthesis; 5-aminolevulinate from L-glutamyl-tRNA(Glu): step 2/2.</text>
</comment>
<comment type="subunit">
    <text evidence="1">Homodimer.</text>
</comment>
<comment type="subcellular location">
    <subcellularLocation>
        <location evidence="1">Cytoplasm</location>
    </subcellularLocation>
</comment>
<comment type="similarity">
    <text evidence="1">Belongs to the class-III pyridoxal-phosphate-dependent aminotransferase family. HemL subfamily.</text>
</comment>
<gene>
    <name evidence="1" type="primary">hemL</name>
    <name type="ordered locus">Fjoh_1914</name>
</gene>
<name>GSA_FLAJ1</name>
<feature type="chain" id="PRO_1000079922" description="Glutamate-1-semialdehyde 2,1-aminomutase">
    <location>
        <begin position="1"/>
        <end position="428"/>
    </location>
</feature>
<feature type="modified residue" description="N6-(pyridoxal phosphate)lysine" evidence="1">
    <location>
        <position position="267"/>
    </location>
</feature>
<organism>
    <name type="scientific">Flavobacterium johnsoniae (strain ATCC 17061 / DSM 2064 / JCM 8514 / BCRC 14874 / CCUG 350202 / NBRC 14942 / NCIMB 11054 / UW101)</name>
    <name type="common">Cytophaga johnsonae</name>
    <dbReference type="NCBI Taxonomy" id="376686"/>
    <lineage>
        <taxon>Bacteria</taxon>
        <taxon>Pseudomonadati</taxon>
        <taxon>Bacteroidota</taxon>
        <taxon>Flavobacteriia</taxon>
        <taxon>Flavobacteriales</taxon>
        <taxon>Flavobacteriaceae</taxon>
        <taxon>Flavobacterium</taxon>
    </lineage>
</organism>
<evidence type="ECO:0000255" key="1">
    <source>
        <dbReference type="HAMAP-Rule" id="MF_00375"/>
    </source>
</evidence>
<dbReference type="EC" id="5.4.3.8" evidence="1"/>
<dbReference type="EMBL" id="CP000685">
    <property type="protein sequence ID" value="ABQ04946.1"/>
    <property type="molecule type" value="Genomic_DNA"/>
</dbReference>
<dbReference type="RefSeq" id="WP_012023990.1">
    <property type="nucleotide sequence ID" value="NC_009441.1"/>
</dbReference>
<dbReference type="SMR" id="A5FIM3"/>
<dbReference type="STRING" id="376686.Fjoh_1914"/>
<dbReference type="KEGG" id="fjo:Fjoh_1914"/>
<dbReference type="eggNOG" id="COG0001">
    <property type="taxonomic scope" value="Bacteria"/>
</dbReference>
<dbReference type="HOGENOM" id="CLU_016922_1_5_10"/>
<dbReference type="OrthoDB" id="9807885at2"/>
<dbReference type="UniPathway" id="UPA00251">
    <property type="reaction ID" value="UER00317"/>
</dbReference>
<dbReference type="Proteomes" id="UP000006694">
    <property type="component" value="Chromosome"/>
</dbReference>
<dbReference type="GO" id="GO:0005737">
    <property type="term" value="C:cytoplasm"/>
    <property type="evidence" value="ECO:0007669"/>
    <property type="project" value="UniProtKB-SubCell"/>
</dbReference>
<dbReference type="GO" id="GO:0042286">
    <property type="term" value="F:glutamate-1-semialdehyde 2,1-aminomutase activity"/>
    <property type="evidence" value="ECO:0007669"/>
    <property type="project" value="UniProtKB-UniRule"/>
</dbReference>
<dbReference type="GO" id="GO:0030170">
    <property type="term" value="F:pyridoxal phosphate binding"/>
    <property type="evidence" value="ECO:0007669"/>
    <property type="project" value="InterPro"/>
</dbReference>
<dbReference type="GO" id="GO:0008483">
    <property type="term" value="F:transaminase activity"/>
    <property type="evidence" value="ECO:0007669"/>
    <property type="project" value="InterPro"/>
</dbReference>
<dbReference type="GO" id="GO:0006782">
    <property type="term" value="P:protoporphyrinogen IX biosynthetic process"/>
    <property type="evidence" value="ECO:0007669"/>
    <property type="project" value="UniProtKB-UniRule"/>
</dbReference>
<dbReference type="CDD" id="cd00610">
    <property type="entry name" value="OAT_like"/>
    <property type="match status" value="1"/>
</dbReference>
<dbReference type="FunFam" id="3.40.640.10:FF:000021">
    <property type="entry name" value="Glutamate-1-semialdehyde 2,1-aminomutase"/>
    <property type="match status" value="1"/>
</dbReference>
<dbReference type="Gene3D" id="3.90.1150.10">
    <property type="entry name" value="Aspartate Aminotransferase, domain 1"/>
    <property type="match status" value="1"/>
</dbReference>
<dbReference type="Gene3D" id="3.40.640.10">
    <property type="entry name" value="Type I PLP-dependent aspartate aminotransferase-like (Major domain)"/>
    <property type="match status" value="1"/>
</dbReference>
<dbReference type="HAMAP" id="MF_00375">
    <property type="entry name" value="HemL_aminotrans_3"/>
    <property type="match status" value="1"/>
</dbReference>
<dbReference type="InterPro" id="IPR004639">
    <property type="entry name" value="4pyrrol_synth_GluAld_NH2Trfase"/>
</dbReference>
<dbReference type="InterPro" id="IPR005814">
    <property type="entry name" value="Aminotrans_3"/>
</dbReference>
<dbReference type="InterPro" id="IPR049704">
    <property type="entry name" value="Aminotrans_3_PPA_site"/>
</dbReference>
<dbReference type="InterPro" id="IPR015424">
    <property type="entry name" value="PyrdxlP-dep_Trfase"/>
</dbReference>
<dbReference type="InterPro" id="IPR015421">
    <property type="entry name" value="PyrdxlP-dep_Trfase_major"/>
</dbReference>
<dbReference type="InterPro" id="IPR015422">
    <property type="entry name" value="PyrdxlP-dep_Trfase_small"/>
</dbReference>
<dbReference type="NCBIfam" id="TIGR00713">
    <property type="entry name" value="hemL"/>
    <property type="match status" value="1"/>
</dbReference>
<dbReference type="NCBIfam" id="NF000818">
    <property type="entry name" value="PRK00062.1"/>
    <property type="match status" value="1"/>
</dbReference>
<dbReference type="PANTHER" id="PTHR43713">
    <property type="entry name" value="GLUTAMATE-1-SEMIALDEHYDE 2,1-AMINOMUTASE"/>
    <property type="match status" value="1"/>
</dbReference>
<dbReference type="PANTHER" id="PTHR43713:SF3">
    <property type="entry name" value="GLUTAMATE-1-SEMIALDEHYDE 2,1-AMINOMUTASE 1, CHLOROPLASTIC-RELATED"/>
    <property type="match status" value="1"/>
</dbReference>
<dbReference type="Pfam" id="PF00202">
    <property type="entry name" value="Aminotran_3"/>
    <property type="match status" value="1"/>
</dbReference>
<dbReference type="SUPFAM" id="SSF53383">
    <property type="entry name" value="PLP-dependent transferases"/>
    <property type="match status" value="1"/>
</dbReference>
<dbReference type="PROSITE" id="PS00600">
    <property type="entry name" value="AA_TRANSFER_CLASS_3"/>
    <property type="match status" value="1"/>
</dbReference>
<protein>
    <recommendedName>
        <fullName evidence="1">Glutamate-1-semialdehyde 2,1-aminomutase</fullName>
        <shortName evidence="1">GSA</shortName>
        <ecNumber evidence="1">5.4.3.8</ecNumber>
    </recommendedName>
    <alternativeName>
        <fullName evidence="1">Glutamate-1-semialdehyde aminotransferase</fullName>
        <shortName evidence="1">GSA-AT</shortName>
    </alternativeName>
</protein>
<reference key="1">
    <citation type="journal article" date="2009" name="Appl. Environ. Microbiol.">
        <title>Novel features of the polysaccharide-digesting gliding bacterium Flavobacterium johnsoniae as revealed by genome sequence analysis.</title>
        <authorList>
            <person name="McBride M.J."/>
            <person name="Xie G."/>
            <person name="Martens E.C."/>
            <person name="Lapidus A."/>
            <person name="Henrissat B."/>
            <person name="Rhodes R.G."/>
            <person name="Goltsman E."/>
            <person name="Wang W."/>
            <person name="Xu J."/>
            <person name="Hunnicutt D.W."/>
            <person name="Staroscik A.M."/>
            <person name="Hoover T.R."/>
            <person name="Cheng Y.Q."/>
            <person name="Stein J.L."/>
        </authorList>
    </citation>
    <scope>NUCLEOTIDE SEQUENCE [LARGE SCALE GENOMIC DNA]</scope>
    <source>
        <strain>ATCC 17061 / DSM 2064 / JCM 8514 / BCRC 14874 / CCUG 350202 / NBRC 14942 / NCIMB 11054 / UW101</strain>
    </source>
</reference>
<accession>A5FIM3</accession>
<keyword id="KW-0963">Cytoplasm</keyword>
<keyword id="KW-0413">Isomerase</keyword>
<keyword id="KW-0627">Porphyrin biosynthesis</keyword>
<keyword id="KW-0663">Pyridoxal phosphate</keyword>
<proteinExistence type="inferred from homology"/>